<accession>B3Q733</accession>
<comment type="function">
    <text evidence="1">Catalyzes the NADPH-dependent reduction of L-glutamate 5-phosphate into L-glutamate 5-semialdehyde and phosphate. The product spontaneously undergoes cyclization to form 1-pyrroline-5-carboxylate.</text>
</comment>
<comment type="catalytic activity">
    <reaction evidence="1">
        <text>L-glutamate 5-semialdehyde + phosphate + NADP(+) = L-glutamyl 5-phosphate + NADPH + H(+)</text>
        <dbReference type="Rhea" id="RHEA:19541"/>
        <dbReference type="ChEBI" id="CHEBI:15378"/>
        <dbReference type="ChEBI" id="CHEBI:43474"/>
        <dbReference type="ChEBI" id="CHEBI:57783"/>
        <dbReference type="ChEBI" id="CHEBI:58066"/>
        <dbReference type="ChEBI" id="CHEBI:58274"/>
        <dbReference type="ChEBI" id="CHEBI:58349"/>
        <dbReference type="EC" id="1.2.1.41"/>
    </reaction>
</comment>
<comment type="pathway">
    <text evidence="1">Amino-acid biosynthesis; L-proline biosynthesis; L-glutamate 5-semialdehyde from L-glutamate: step 2/2.</text>
</comment>
<comment type="subcellular location">
    <subcellularLocation>
        <location evidence="1">Cytoplasm</location>
    </subcellularLocation>
</comment>
<comment type="similarity">
    <text evidence="1">Belongs to the gamma-glutamyl phosphate reductase family.</text>
</comment>
<dbReference type="EC" id="1.2.1.41" evidence="1"/>
<dbReference type="EMBL" id="CP001096">
    <property type="protein sequence ID" value="ACE98721.1"/>
    <property type="molecule type" value="Genomic_DNA"/>
</dbReference>
<dbReference type="RefSeq" id="WP_012493957.1">
    <property type="nucleotide sequence ID" value="NC_011004.1"/>
</dbReference>
<dbReference type="SMR" id="B3Q733"/>
<dbReference type="KEGG" id="rpt:Rpal_0159"/>
<dbReference type="HOGENOM" id="CLU_030231_0_0_5"/>
<dbReference type="OrthoDB" id="9809970at2"/>
<dbReference type="UniPathway" id="UPA00098">
    <property type="reaction ID" value="UER00360"/>
</dbReference>
<dbReference type="Proteomes" id="UP000001725">
    <property type="component" value="Chromosome"/>
</dbReference>
<dbReference type="GO" id="GO:0005737">
    <property type="term" value="C:cytoplasm"/>
    <property type="evidence" value="ECO:0007669"/>
    <property type="project" value="UniProtKB-SubCell"/>
</dbReference>
<dbReference type="GO" id="GO:0004350">
    <property type="term" value="F:glutamate-5-semialdehyde dehydrogenase activity"/>
    <property type="evidence" value="ECO:0007669"/>
    <property type="project" value="UniProtKB-UniRule"/>
</dbReference>
<dbReference type="GO" id="GO:0050661">
    <property type="term" value="F:NADP binding"/>
    <property type="evidence" value="ECO:0007669"/>
    <property type="project" value="InterPro"/>
</dbReference>
<dbReference type="GO" id="GO:0055129">
    <property type="term" value="P:L-proline biosynthetic process"/>
    <property type="evidence" value="ECO:0007669"/>
    <property type="project" value="UniProtKB-UniRule"/>
</dbReference>
<dbReference type="CDD" id="cd07079">
    <property type="entry name" value="ALDH_F18-19_ProA-GPR"/>
    <property type="match status" value="1"/>
</dbReference>
<dbReference type="FunFam" id="3.40.309.10:FF:000006">
    <property type="entry name" value="Gamma-glutamyl phosphate reductase"/>
    <property type="match status" value="1"/>
</dbReference>
<dbReference type="Gene3D" id="3.40.605.10">
    <property type="entry name" value="Aldehyde Dehydrogenase, Chain A, domain 1"/>
    <property type="match status" value="1"/>
</dbReference>
<dbReference type="Gene3D" id="3.40.309.10">
    <property type="entry name" value="Aldehyde Dehydrogenase, Chain A, domain 2"/>
    <property type="match status" value="1"/>
</dbReference>
<dbReference type="HAMAP" id="MF_00412">
    <property type="entry name" value="ProA"/>
    <property type="match status" value="1"/>
</dbReference>
<dbReference type="InterPro" id="IPR016161">
    <property type="entry name" value="Ald_DH/histidinol_DH"/>
</dbReference>
<dbReference type="InterPro" id="IPR016163">
    <property type="entry name" value="Ald_DH_C"/>
</dbReference>
<dbReference type="InterPro" id="IPR016162">
    <property type="entry name" value="Ald_DH_N"/>
</dbReference>
<dbReference type="InterPro" id="IPR015590">
    <property type="entry name" value="Aldehyde_DH_dom"/>
</dbReference>
<dbReference type="InterPro" id="IPR020593">
    <property type="entry name" value="G-glutamylP_reductase_CS"/>
</dbReference>
<dbReference type="InterPro" id="IPR012134">
    <property type="entry name" value="Glu-5-SA_DH"/>
</dbReference>
<dbReference type="InterPro" id="IPR000965">
    <property type="entry name" value="GPR_dom"/>
</dbReference>
<dbReference type="NCBIfam" id="NF001221">
    <property type="entry name" value="PRK00197.1"/>
    <property type="match status" value="1"/>
</dbReference>
<dbReference type="NCBIfam" id="TIGR00407">
    <property type="entry name" value="proA"/>
    <property type="match status" value="1"/>
</dbReference>
<dbReference type="PANTHER" id="PTHR11063:SF8">
    <property type="entry name" value="DELTA-1-PYRROLINE-5-CARBOXYLATE SYNTHASE"/>
    <property type="match status" value="1"/>
</dbReference>
<dbReference type="PANTHER" id="PTHR11063">
    <property type="entry name" value="GLUTAMATE SEMIALDEHYDE DEHYDROGENASE"/>
    <property type="match status" value="1"/>
</dbReference>
<dbReference type="Pfam" id="PF00171">
    <property type="entry name" value="Aldedh"/>
    <property type="match status" value="1"/>
</dbReference>
<dbReference type="PIRSF" id="PIRSF000151">
    <property type="entry name" value="GPR"/>
    <property type="match status" value="1"/>
</dbReference>
<dbReference type="SUPFAM" id="SSF53720">
    <property type="entry name" value="ALDH-like"/>
    <property type="match status" value="1"/>
</dbReference>
<dbReference type="PROSITE" id="PS01223">
    <property type="entry name" value="PROA"/>
    <property type="match status" value="1"/>
</dbReference>
<reference key="1">
    <citation type="submission" date="2008-05" db="EMBL/GenBank/DDBJ databases">
        <title>Complete sequence of Rhodopseudomonas palustris TIE-1.</title>
        <authorList>
            <consortium name="US DOE Joint Genome Institute"/>
            <person name="Lucas S."/>
            <person name="Copeland A."/>
            <person name="Lapidus A."/>
            <person name="Glavina del Rio T."/>
            <person name="Dalin E."/>
            <person name="Tice H."/>
            <person name="Pitluck S."/>
            <person name="Chain P."/>
            <person name="Malfatti S."/>
            <person name="Shin M."/>
            <person name="Vergez L."/>
            <person name="Lang D."/>
            <person name="Schmutz J."/>
            <person name="Larimer F."/>
            <person name="Land M."/>
            <person name="Hauser L."/>
            <person name="Kyrpides N."/>
            <person name="Mikhailova N."/>
            <person name="Emerson D."/>
            <person name="Newman D.K."/>
            <person name="Roden E."/>
            <person name="Richardson P."/>
        </authorList>
    </citation>
    <scope>NUCLEOTIDE SEQUENCE [LARGE SCALE GENOMIC DNA]</scope>
    <source>
        <strain>TIE-1</strain>
    </source>
</reference>
<proteinExistence type="inferred from homology"/>
<gene>
    <name evidence="1" type="primary">proA</name>
    <name type="ordered locus">Rpal_0159</name>
</gene>
<sequence>MTASLKAIDGSAELTTLMTDLGRQARAAARILALAPPEQKNRALEAMERAIRAGADKILAANAEDVDDAKAAGTTSAFLDRLTLTPARVEAMAEGIAVVRGIADPVGTVTESWQRPNGMTIERVRVPLGVVAVIFESRPNVAADAGVLCLKSGNAVILRGGSESFRSCRAIHDCLVQGLREAGLPDAAITLVPTRDRAAVGLLLAGLDGSVDVIVPRGGKSLVARVESEARVPVFAHLEGVNHVYVDRSADLEMAKSIVLNAKMRRTGVCGAAETLLIDRAAATTHLAPLVTMLIDSGCEVRGDQTVQKVDPRVKPASDEDWDTEYLDAVIAAKLVDGVDGAIAHIHNHGSHHTDAIVAEDVQAAAKFLGEVDSAIVLHNASTQFADGGEFGFGAEIGIATGKFHARGPVGAEQLTTFKYRIHGSGQTRP</sequence>
<organism>
    <name type="scientific">Rhodopseudomonas palustris (strain TIE-1)</name>
    <dbReference type="NCBI Taxonomy" id="395960"/>
    <lineage>
        <taxon>Bacteria</taxon>
        <taxon>Pseudomonadati</taxon>
        <taxon>Pseudomonadota</taxon>
        <taxon>Alphaproteobacteria</taxon>
        <taxon>Hyphomicrobiales</taxon>
        <taxon>Nitrobacteraceae</taxon>
        <taxon>Rhodopseudomonas</taxon>
    </lineage>
</organism>
<feature type="chain" id="PRO_1000193643" description="Gamma-glutamyl phosphate reductase">
    <location>
        <begin position="1"/>
        <end position="430"/>
    </location>
</feature>
<protein>
    <recommendedName>
        <fullName evidence="1">Gamma-glutamyl phosphate reductase</fullName>
        <shortName evidence="1">GPR</shortName>
        <ecNumber evidence="1">1.2.1.41</ecNumber>
    </recommendedName>
    <alternativeName>
        <fullName evidence="1">Glutamate-5-semialdehyde dehydrogenase</fullName>
    </alternativeName>
    <alternativeName>
        <fullName evidence="1">Glutamyl-gamma-semialdehyde dehydrogenase</fullName>
        <shortName evidence="1">GSA dehydrogenase</shortName>
    </alternativeName>
</protein>
<name>PROA_RHOPT</name>
<evidence type="ECO:0000255" key="1">
    <source>
        <dbReference type="HAMAP-Rule" id="MF_00412"/>
    </source>
</evidence>
<keyword id="KW-0028">Amino-acid biosynthesis</keyword>
<keyword id="KW-0963">Cytoplasm</keyword>
<keyword id="KW-0521">NADP</keyword>
<keyword id="KW-0560">Oxidoreductase</keyword>
<keyword id="KW-0641">Proline biosynthesis</keyword>